<evidence type="ECO:0000255" key="1">
    <source>
        <dbReference type="HAMAP-Rule" id="MF_00030"/>
    </source>
</evidence>
<evidence type="ECO:0000255" key="2">
    <source>
        <dbReference type="PROSITE-ProRule" id="PRU01175"/>
    </source>
</evidence>
<protein>
    <recommendedName>
        <fullName evidence="1">Deoxyguanosinetriphosphate triphosphohydrolase</fullName>
        <shortName evidence="1">dGTP triphosphohydrolase</shortName>
        <shortName evidence="1">dGTPase</shortName>
        <ecNumber evidence="1">3.1.5.1</ecNumber>
    </recommendedName>
</protein>
<feature type="chain" id="PRO_1000006550" description="Deoxyguanosinetriphosphate triphosphohydrolase">
    <location>
        <begin position="1"/>
        <end position="505"/>
    </location>
</feature>
<feature type="domain" description="HD" evidence="2">
    <location>
        <begin position="66"/>
        <end position="273"/>
    </location>
</feature>
<gene>
    <name evidence="1" type="primary">dgt</name>
    <name type="ordered locus">SCH_0208</name>
</gene>
<dbReference type="EC" id="3.1.5.1" evidence="1"/>
<dbReference type="EMBL" id="AE017220">
    <property type="protein sequence ID" value="AAX64114.1"/>
    <property type="molecule type" value="Genomic_DNA"/>
</dbReference>
<dbReference type="RefSeq" id="WP_001539047.1">
    <property type="nucleotide sequence ID" value="NC_006905.1"/>
</dbReference>
<dbReference type="SMR" id="Q57T47"/>
<dbReference type="KEGG" id="sec:SCH_0208"/>
<dbReference type="HOGENOM" id="CLU_028163_2_1_6"/>
<dbReference type="Proteomes" id="UP000000538">
    <property type="component" value="Chromosome"/>
</dbReference>
<dbReference type="GO" id="GO:0008832">
    <property type="term" value="F:dGTPase activity"/>
    <property type="evidence" value="ECO:0007669"/>
    <property type="project" value="UniProtKB-UniRule"/>
</dbReference>
<dbReference type="GO" id="GO:0000287">
    <property type="term" value="F:magnesium ion binding"/>
    <property type="evidence" value="ECO:0007669"/>
    <property type="project" value="UniProtKB-UniRule"/>
</dbReference>
<dbReference type="GO" id="GO:0006203">
    <property type="term" value="P:dGTP catabolic process"/>
    <property type="evidence" value="ECO:0007669"/>
    <property type="project" value="InterPro"/>
</dbReference>
<dbReference type="CDD" id="cd00077">
    <property type="entry name" value="HDc"/>
    <property type="match status" value="1"/>
</dbReference>
<dbReference type="FunFam" id="1.10.3210.10:FF:000009">
    <property type="entry name" value="Deoxyguanosinetriphosphate triphosphohydrolase"/>
    <property type="match status" value="1"/>
</dbReference>
<dbReference type="FunFam" id="1.10.3210.10:FF:000010">
    <property type="entry name" value="Deoxyguanosinetriphosphate triphosphohydrolase"/>
    <property type="match status" value="1"/>
</dbReference>
<dbReference type="FunFam" id="1.10.3410.10:FF:000001">
    <property type="entry name" value="Deoxyguanosinetriphosphate triphosphohydrolase"/>
    <property type="match status" value="1"/>
</dbReference>
<dbReference type="Gene3D" id="1.10.3210.10">
    <property type="entry name" value="Hypothetical protein af1432"/>
    <property type="match status" value="2"/>
</dbReference>
<dbReference type="Gene3D" id="1.10.3410.10">
    <property type="entry name" value="putative deoxyguanosinetriphosphate triphosphohydrolase like domain"/>
    <property type="match status" value="1"/>
</dbReference>
<dbReference type="HAMAP" id="MF_00030">
    <property type="entry name" value="dGTPase_type1"/>
    <property type="match status" value="1"/>
</dbReference>
<dbReference type="InterPro" id="IPR023293">
    <property type="entry name" value="dGTP_triP_hydro_central_sf"/>
</dbReference>
<dbReference type="InterPro" id="IPR006261">
    <property type="entry name" value="dGTPase"/>
</dbReference>
<dbReference type="InterPro" id="IPR050135">
    <property type="entry name" value="dGTPase-like"/>
</dbReference>
<dbReference type="InterPro" id="IPR020779">
    <property type="entry name" value="dNTPase_1"/>
</dbReference>
<dbReference type="InterPro" id="IPR003607">
    <property type="entry name" value="HD/PDEase_dom"/>
</dbReference>
<dbReference type="InterPro" id="IPR006674">
    <property type="entry name" value="HD_domain"/>
</dbReference>
<dbReference type="NCBIfam" id="TIGR01353">
    <property type="entry name" value="dGTP_triPase"/>
    <property type="match status" value="1"/>
</dbReference>
<dbReference type="NCBIfam" id="NF003429">
    <property type="entry name" value="PRK04926.1"/>
    <property type="match status" value="1"/>
</dbReference>
<dbReference type="PANTHER" id="PTHR11373:SF32">
    <property type="entry name" value="DEOXYGUANOSINETRIPHOSPHATE TRIPHOSPHOHYDROLASE"/>
    <property type="match status" value="1"/>
</dbReference>
<dbReference type="PANTHER" id="PTHR11373">
    <property type="entry name" value="DEOXYNUCLEOSIDE TRIPHOSPHATE TRIPHOSPHOHYDROLASE"/>
    <property type="match status" value="1"/>
</dbReference>
<dbReference type="Pfam" id="PF01966">
    <property type="entry name" value="HD"/>
    <property type="match status" value="1"/>
</dbReference>
<dbReference type="SMART" id="SM00471">
    <property type="entry name" value="HDc"/>
    <property type="match status" value="1"/>
</dbReference>
<dbReference type="SUPFAM" id="SSF109604">
    <property type="entry name" value="HD-domain/PDEase-like"/>
    <property type="match status" value="1"/>
</dbReference>
<dbReference type="PROSITE" id="PS51831">
    <property type="entry name" value="HD"/>
    <property type="match status" value="1"/>
</dbReference>
<name>DGTP_SALCH</name>
<organism>
    <name type="scientific">Salmonella choleraesuis (strain SC-B67)</name>
    <dbReference type="NCBI Taxonomy" id="321314"/>
    <lineage>
        <taxon>Bacteria</taxon>
        <taxon>Pseudomonadati</taxon>
        <taxon>Pseudomonadota</taxon>
        <taxon>Gammaproteobacteria</taxon>
        <taxon>Enterobacterales</taxon>
        <taxon>Enterobacteriaceae</taxon>
        <taxon>Salmonella</taxon>
    </lineage>
</organism>
<comment type="function">
    <text evidence="1">dGTPase preferentially hydrolyzes dGTP over the other canonical NTPs.</text>
</comment>
<comment type="catalytic activity">
    <reaction evidence="1">
        <text>dGTP + H2O = 2'-deoxyguanosine + triphosphate + H(+)</text>
        <dbReference type="Rhea" id="RHEA:15193"/>
        <dbReference type="ChEBI" id="CHEBI:15377"/>
        <dbReference type="ChEBI" id="CHEBI:15378"/>
        <dbReference type="ChEBI" id="CHEBI:17172"/>
        <dbReference type="ChEBI" id="CHEBI:18036"/>
        <dbReference type="ChEBI" id="CHEBI:61429"/>
        <dbReference type="EC" id="3.1.5.1"/>
    </reaction>
</comment>
<comment type="cofactor">
    <cofactor evidence="1">
        <name>Mg(2+)</name>
        <dbReference type="ChEBI" id="CHEBI:18420"/>
    </cofactor>
</comment>
<comment type="subunit">
    <text evidence="1">Homotetramer.</text>
</comment>
<comment type="similarity">
    <text evidence="1">Belongs to the dGTPase family. Type 1 subfamily.</text>
</comment>
<proteinExistence type="inferred from homology"/>
<keyword id="KW-0378">Hydrolase</keyword>
<keyword id="KW-0460">Magnesium</keyword>
<reference key="1">
    <citation type="journal article" date="2005" name="Nucleic Acids Res.">
        <title>The genome sequence of Salmonella enterica serovar Choleraesuis, a highly invasive and resistant zoonotic pathogen.</title>
        <authorList>
            <person name="Chiu C.-H."/>
            <person name="Tang P."/>
            <person name="Chu C."/>
            <person name="Hu S."/>
            <person name="Bao Q."/>
            <person name="Yu J."/>
            <person name="Chou Y.-Y."/>
            <person name="Wang H.-S."/>
            <person name="Lee Y.-S."/>
        </authorList>
    </citation>
    <scope>NUCLEOTIDE SEQUENCE [LARGE SCALE GENOMIC DNA]</scope>
    <source>
        <strain>SC-B67</strain>
    </source>
</reference>
<sequence>MASIDFRNKINWHRRYRSPQGVKTEHEILRIFESDRGRIINSPAIRRLQQKTQVFPLERNAAVRTRLTHSMEVQQVGRYIAKEILSRLKEQNRLEEYGLDALTGPFESIVEMACLMHDIGNPPFGHFGEAAINDWFRQRLHPEDAESQPLTHDRCVVSSLRLQEGEENLNDIRRKVRQDICHFEGNAQGIRLVHTLMRMNLTWAQVGGILKYTRPAWWRGPVPDSHHYLMKKPGYYLSEEKYIARLRKELQLAPYSRFPLTWIMEAADDISYCVADLEDAVEKRIFSVEQLYHHLYHAWGHHEKDSLFELVVGNAWEKSRANTLSRSTEDQFFMYLRVNTLNKLVPYAAQRFIDNLPQIFAGTFNQALLEDASGFSRLLELYKNVAVEHVFSHPDVEQLELQGYRVISGLLDIYQPLLSLSLNDFRELVEKERLKRFPIESRLFQKLSTRHRLAYVEVVSKLPTDSAEYPVLEYYYRCRLIQDYISGMTDLYAWDEYRRLMAVEQ</sequence>
<accession>Q57T47</accession>